<gene>
    <name type="primary">tkrA</name>
</gene>
<keyword id="KW-0963">Cytoplasm</keyword>
<keyword id="KW-0520">NAD</keyword>
<keyword id="KW-0521">NADP</keyword>
<keyword id="KW-0560">Oxidoreductase</keyword>
<reference key="1">
    <citation type="patent" date="1991-07-16" number="US5032514">
        <title>Metabolic pathway engineering to increase production of ascorbic acid intermediates.</title>
        <authorList>
            <person name="Anderson S."/>
            <person name="Lazarus R.A."/>
            <person name="Miller H.I."/>
            <person name="Stafford R.K."/>
        </authorList>
    </citation>
    <scope>NUCLEOTIDE SEQUENCE [GENOMIC DNA]</scope>
    <scope>CHARACTERIZATION</scope>
    <source>
        <strain>ATCC 21998 / FERM P-2439</strain>
    </source>
</reference>
<proteinExistence type="evidence at protein level"/>
<sequence length="323" mass="35336">MKPEVLLYKSLPDDLRARLDEHFTVTAINGLSPETIAEHGGAGARRRHDRLQQHGGSSAAGENAKLRAASTISVGYDNFDVEALNQRGIVLIDTPTVLTETVADTMMALVLSSARRVVEVAERVKAGEWRRSIGPDWFGIDVHHKKMGILGMGRIGLALAQRAHHGFGMPILYNARKHHEEAESRFNAQYCDLDTLLRESDFLCISLPLTEQTHHMIGREQLAKMKPSAILINAGRGPVVDEQALIAALKDKTIHAAGLDVFEQEPLPVDSELLTLPNVVALPHIGSATHETRYGMARDAVDNLIAALAGKVEKNCVNPQVLR</sequence>
<organism>
    <name type="scientific">Enterobacter agglomerans</name>
    <name type="common">Erwinia herbicola</name>
    <name type="synonym">Pantoea agglomerans</name>
    <dbReference type="NCBI Taxonomy" id="549"/>
    <lineage>
        <taxon>Bacteria</taxon>
        <taxon>Pseudomonadati</taxon>
        <taxon>Pseudomonadota</taxon>
        <taxon>Gammaproteobacteria</taxon>
        <taxon>Enterobacterales</taxon>
        <taxon>Erwiniaceae</taxon>
        <taxon>Pantoea</taxon>
        <taxon>Pantoea agglomerans group</taxon>
    </lineage>
</organism>
<accession>P58000</accession>
<name>GHRB_ENTAG</name>
<comment type="function">
    <text evidence="1">Catalyzes the NADPH-dependent reduction of glyoxylate and hydroxypyruvate into glycolate and glycerate, respectively.</text>
</comment>
<comment type="catalytic activity">
    <reaction>
        <text>glycolate + NADP(+) = glyoxylate + NADPH + H(+)</text>
        <dbReference type="Rhea" id="RHEA:10992"/>
        <dbReference type="ChEBI" id="CHEBI:15378"/>
        <dbReference type="ChEBI" id="CHEBI:29805"/>
        <dbReference type="ChEBI" id="CHEBI:36655"/>
        <dbReference type="ChEBI" id="CHEBI:57783"/>
        <dbReference type="ChEBI" id="CHEBI:58349"/>
        <dbReference type="EC" id="1.1.1.79"/>
    </reaction>
</comment>
<comment type="catalytic activity">
    <reaction>
        <text>(R)-glycerate + NAD(+) = 3-hydroxypyruvate + NADH + H(+)</text>
        <dbReference type="Rhea" id="RHEA:17905"/>
        <dbReference type="ChEBI" id="CHEBI:15378"/>
        <dbReference type="ChEBI" id="CHEBI:16659"/>
        <dbReference type="ChEBI" id="CHEBI:17180"/>
        <dbReference type="ChEBI" id="CHEBI:57540"/>
        <dbReference type="ChEBI" id="CHEBI:57945"/>
        <dbReference type="EC" id="1.1.1.81"/>
    </reaction>
</comment>
<comment type="catalytic activity">
    <reaction>
        <text>(R)-glycerate + NADP(+) = 3-hydroxypyruvate + NADPH + H(+)</text>
        <dbReference type="Rhea" id="RHEA:18657"/>
        <dbReference type="ChEBI" id="CHEBI:15378"/>
        <dbReference type="ChEBI" id="CHEBI:16659"/>
        <dbReference type="ChEBI" id="CHEBI:17180"/>
        <dbReference type="ChEBI" id="CHEBI:57783"/>
        <dbReference type="ChEBI" id="CHEBI:58349"/>
        <dbReference type="EC" id="1.1.1.81"/>
    </reaction>
</comment>
<comment type="subunit">
    <text evidence="1">Homodimer.</text>
</comment>
<comment type="subcellular location">
    <subcellularLocation>
        <location evidence="1">Cytoplasm</location>
    </subcellularLocation>
</comment>
<comment type="similarity">
    <text evidence="3">Belongs to the D-isomer specific 2-hydroxyacid dehydrogenase family. GhrB subfamily.</text>
</comment>
<feature type="chain" id="PRO_0000076031" description="Glyoxylate/hydroxypyruvate reductase B">
    <location>
        <begin position="1"/>
        <end position="323"/>
    </location>
</feature>
<feature type="region of interest" description="Disordered" evidence="2">
    <location>
        <begin position="37"/>
        <end position="62"/>
    </location>
</feature>
<feature type="active site" evidence="1">
    <location>
        <position position="236"/>
    </location>
</feature>
<feature type="active site" evidence="1">
    <location>
        <position position="265"/>
    </location>
</feature>
<feature type="active site" description="Proton donor" evidence="1">
    <location>
        <position position="284"/>
    </location>
</feature>
<dbReference type="EC" id="1.1.1.79"/>
<dbReference type="EC" id="1.1.1.81"/>
<dbReference type="SMR" id="P58000"/>
<dbReference type="GO" id="GO:0005829">
    <property type="term" value="C:cytosol"/>
    <property type="evidence" value="ECO:0007669"/>
    <property type="project" value="TreeGrafter"/>
</dbReference>
<dbReference type="GO" id="GO:0005886">
    <property type="term" value="C:plasma membrane"/>
    <property type="evidence" value="ECO:0007669"/>
    <property type="project" value="UniProtKB-UniRule"/>
</dbReference>
<dbReference type="GO" id="GO:0030267">
    <property type="term" value="F:glyoxylate reductase (NADPH) activity"/>
    <property type="evidence" value="ECO:0007669"/>
    <property type="project" value="UniProtKB-UniRule"/>
</dbReference>
<dbReference type="GO" id="GO:0008465">
    <property type="term" value="F:hydroxypyruvate reductase (NADH) activity"/>
    <property type="evidence" value="ECO:0007669"/>
    <property type="project" value="RHEA"/>
</dbReference>
<dbReference type="GO" id="GO:0120509">
    <property type="term" value="F:hydroxypyruvate reductase (NADPH) activity"/>
    <property type="evidence" value="ECO:0007669"/>
    <property type="project" value="RHEA"/>
</dbReference>
<dbReference type="GO" id="GO:0051287">
    <property type="term" value="F:NAD binding"/>
    <property type="evidence" value="ECO:0007669"/>
    <property type="project" value="InterPro"/>
</dbReference>
<dbReference type="CDD" id="cd05301">
    <property type="entry name" value="GDH"/>
    <property type="match status" value="1"/>
</dbReference>
<dbReference type="FunFam" id="3.40.50.720:FF:000026">
    <property type="entry name" value="Glyoxylate/hydroxypyruvate reductase B"/>
    <property type="match status" value="1"/>
</dbReference>
<dbReference type="Gene3D" id="3.40.50.720">
    <property type="entry name" value="NAD(P)-binding Rossmann-like Domain"/>
    <property type="match status" value="2"/>
</dbReference>
<dbReference type="HAMAP" id="MF_01667">
    <property type="entry name" value="2_Hacid_dh_C_GhrB"/>
    <property type="match status" value="1"/>
</dbReference>
<dbReference type="InterPro" id="IPR050223">
    <property type="entry name" value="D-isomer_2-hydroxyacid_DH"/>
</dbReference>
<dbReference type="InterPro" id="IPR006139">
    <property type="entry name" value="D-isomer_2_OHA_DH_cat_dom"/>
</dbReference>
<dbReference type="InterPro" id="IPR029753">
    <property type="entry name" value="D-isomer_DH_CS"/>
</dbReference>
<dbReference type="InterPro" id="IPR006140">
    <property type="entry name" value="D-isomer_DH_NAD-bd"/>
</dbReference>
<dbReference type="InterPro" id="IPR023756">
    <property type="entry name" value="Glyo/OHPyrv_Rdtase_B"/>
</dbReference>
<dbReference type="InterPro" id="IPR036291">
    <property type="entry name" value="NAD(P)-bd_dom_sf"/>
</dbReference>
<dbReference type="NCBIfam" id="NF011938">
    <property type="entry name" value="PRK15409.1"/>
    <property type="match status" value="1"/>
</dbReference>
<dbReference type="PANTHER" id="PTHR10996">
    <property type="entry name" value="2-HYDROXYACID DEHYDROGENASE-RELATED"/>
    <property type="match status" value="1"/>
</dbReference>
<dbReference type="PANTHER" id="PTHR10996:SF283">
    <property type="entry name" value="GLYOXYLATE_HYDROXYPYRUVATE REDUCTASE B"/>
    <property type="match status" value="1"/>
</dbReference>
<dbReference type="Pfam" id="PF00389">
    <property type="entry name" value="2-Hacid_dh"/>
    <property type="match status" value="1"/>
</dbReference>
<dbReference type="Pfam" id="PF02826">
    <property type="entry name" value="2-Hacid_dh_C"/>
    <property type="match status" value="1"/>
</dbReference>
<dbReference type="SUPFAM" id="SSF52283">
    <property type="entry name" value="Formate/glycerate dehydrogenase catalytic domain-like"/>
    <property type="match status" value="1"/>
</dbReference>
<dbReference type="SUPFAM" id="SSF51735">
    <property type="entry name" value="NAD(P)-binding Rossmann-fold domains"/>
    <property type="match status" value="1"/>
</dbReference>
<dbReference type="PROSITE" id="PS00671">
    <property type="entry name" value="D_2_HYDROXYACID_DH_3"/>
    <property type="match status" value="1"/>
</dbReference>
<evidence type="ECO:0000250" key="1"/>
<evidence type="ECO:0000256" key="2">
    <source>
        <dbReference type="SAM" id="MobiDB-lite"/>
    </source>
</evidence>
<evidence type="ECO:0000305" key="3"/>
<protein>
    <recommendedName>
        <fullName>Glyoxylate/hydroxypyruvate reductase B</fullName>
        <ecNumber>1.1.1.79</ecNumber>
        <ecNumber>1.1.1.81</ecNumber>
    </recommendedName>
</protein>